<sequence>AVYVASPYAAGYGYGYAYPYAAAAYRAAPVVGAYAAYPYGVATYPYYY</sequence>
<keyword id="KW-0193">Cuticle</keyword>
<keyword id="KW-0903">Direct protein sequencing</keyword>
<proteinExistence type="evidence at protein level"/>
<name>CU051_LOCMI</name>
<comment type="function">
    <text evidence="2">Component of the cuticle of migratory locust which contains more than 100 different structural proteins.</text>
</comment>
<comment type="mass spectrometry"/>
<feature type="chain" id="PRO_0000252032" description="Cuticle protein 5.1">
    <location>
        <begin position="1"/>
        <end position="48"/>
    </location>
</feature>
<evidence type="ECO:0000269" key="1">
    <source>
    </source>
</evidence>
<evidence type="ECO:0000305" key="2"/>
<organism>
    <name type="scientific">Locusta migratoria</name>
    <name type="common">Migratory locust</name>
    <dbReference type="NCBI Taxonomy" id="7004"/>
    <lineage>
        <taxon>Eukaryota</taxon>
        <taxon>Metazoa</taxon>
        <taxon>Ecdysozoa</taxon>
        <taxon>Arthropoda</taxon>
        <taxon>Hexapoda</taxon>
        <taxon>Insecta</taxon>
        <taxon>Pterygota</taxon>
        <taxon>Neoptera</taxon>
        <taxon>Polyneoptera</taxon>
        <taxon>Orthoptera</taxon>
        <taxon>Caelifera</taxon>
        <taxon>Acrididea</taxon>
        <taxon>Acridomorpha</taxon>
        <taxon>Acridoidea</taxon>
        <taxon>Acrididae</taxon>
        <taxon>Oedipodinae</taxon>
        <taxon>Locusta</taxon>
    </lineage>
</organism>
<reference evidence="2" key="1">
    <citation type="journal article" date="2000" name="Insect Biochem. Mol. Biol.">
        <title>Studies on proteins in post-ecdysial nymphal cuticle of locust, Locusta migratoria, and cockroach, Blaberus craniifer.</title>
        <authorList>
            <person name="Andersen S.O."/>
        </authorList>
    </citation>
    <scope>PROTEIN SEQUENCE</scope>
    <scope>MASS SPECTROMETRY</scope>
    <source>
        <tissue evidence="1">Fifth instar larvae cuticle</tissue>
    </source>
</reference>
<accession>P82169</accession>
<dbReference type="GO" id="GO:0042302">
    <property type="term" value="F:structural constituent of cuticle"/>
    <property type="evidence" value="ECO:0007669"/>
    <property type="project" value="UniProtKB-KW"/>
</dbReference>
<protein>
    <recommendedName>
        <fullName>Cuticle protein 5.1</fullName>
    </recommendedName>
    <alternativeName>
        <fullName>LmNCP5.1</fullName>
    </alternativeName>
</protein>